<sequence length="386" mass="41741">MIDSATVAAILASVLDGKPLEPEAATVLLKARDRSLRQQIQAAANQLRSRQVGDRVSYVINRNLNFTNICEQHCNFCAFRRDADQDGAFWLDASILLEKGAAAVAAGATEFCLQGGLNPAAKRNGRSLDFYVELTASLKQAFPQIHLHAFSPQEIQFIAREDGLSFREVLMALRSAGVGSLPGTAAEVLDDSVRRILCPEKLDSATWKTIIQTAHQVGLPTTSTLLSGHLETPSQQAQHLEQLRQLQQAAIAGETPARITEFILLPFVGELAPAPLRKRVKRDQPDLSDALLVMAVARLYLGDWIANHQPSWVKLGLAGATQALDWGCNDLGGTLMEEHITSMAGAQGGTAQTVEQLEAAIAAAGRQPYQRDTLYRPVAVEAVHAG</sequence>
<comment type="function">
    <text evidence="1">Catalyzes the radical-mediated synthesis of 5-amino-5-(4-hydroxybenzyl)-6-(D-ribitylimino)-5,6-dihydrouracil from 5-amino-6-(D-ribitylamino)uracil and L-tyrosine.</text>
</comment>
<comment type="catalytic activity">
    <reaction evidence="1">
        <text>5-amino-6-(D-ribitylamino)uracil + L-tyrosine + S-adenosyl-L-methionine = 5-amino-5-(4-hydroxybenzyl)-6-(D-ribitylimino)-5,6-dihydrouracil + 2-iminoacetate + 5'-deoxyadenosine + L-methionine + H(+)</text>
        <dbReference type="Rhea" id="RHEA:55200"/>
        <dbReference type="ChEBI" id="CHEBI:15378"/>
        <dbReference type="ChEBI" id="CHEBI:15934"/>
        <dbReference type="ChEBI" id="CHEBI:17319"/>
        <dbReference type="ChEBI" id="CHEBI:57844"/>
        <dbReference type="ChEBI" id="CHEBI:58315"/>
        <dbReference type="ChEBI" id="CHEBI:59789"/>
        <dbReference type="ChEBI" id="CHEBI:77846"/>
        <dbReference type="ChEBI" id="CHEBI:85936"/>
        <dbReference type="EC" id="2.5.1.147"/>
    </reaction>
</comment>
<comment type="cofactor">
    <cofactor evidence="1">
        <name>[4Fe-4S] cluster</name>
        <dbReference type="ChEBI" id="CHEBI:49883"/>
    </cofactor>
    <text evidence="1">Binds 1 [4Fe-4S] cluster. The cluster is coordinated with 3 cysteines and an exchangeable S-adenosyl-L-methionine.</text>
</comment>
<comment type="pathway">
    <text evidence="1">Cofactor biosynthesis; coenzyme F0 biosynthesis.</text>
</comment>
<comment type="subunit">
    <text evidence="1">Consists of two subunits, CofG and CofH.</text>
</comment>
<comment type="similarity">
    <text evidence="1">Belongs to the radical SAM superfamily. CofH family.</text>
</comment>
<gene>
    <name evidence="1" type="primary">cofH</name>
    <name type="ordered locus">Synpcc7942_0686</name>
</gene>
<accession>Q31QF1</accession>
<proteinExistence type="inferred from homology"/>
<feature type="chain" id="PRO_1000069454" description="5-amino-6-(D-ribitylamino)uracil--L-tyrosine 4-hydroxyphenyl transferase">
    <location>
        <begin position="1"/>
        <end position="386"/>
    </location>
</feature>
<feature type="domain" description="Radical SAM core" evidence="2">
    <location>
        <begin position="56"/>
        <end position="303"/>
    </location>
</feature>
<feature type="binding site" evidence="1">
    <location>
        <position position="70"/>
    </location>
    <ligand>
        <name>[4Fe-4S] cluster</name>
        <dbReference type="ChEBI" id="CHEBI:49883"/>
        <note>4Fe-4S-S-AdoMet</note>
    </ligand>
</feature>
<feature type="binding site" evidence="1">
    <location>
        <position position="74"/>
    </location>
    <ligand>
        <name>[4Fe-4S] cluster</name>
        <dbReference type="ChEBI" id="CHEBI:49883"/>
        <note>4Fe-4S-S-AdoMet</note>
    </ligand>
</feature>
<feature type="binding site" evidence="1">
    <location>
        <position position="77"/>
    </location>
    <ligand>
        <name>[4Fe-4S] cluster</name>
        <dbReference type="ChEBI" id="CHEBI:49883"/>
        <note>4Fe-4S-S-AdoMet</note>
    </ligand>
</feature>
<name>COFH_SYNE7</name>
<dbReference type="EC" id="2.5.1.147" evidence="1"/>
<dbReference type="EMBL" id="CP000100">
    <property type="protein sequence ID" value="ABB56718.1"/>
    <property type="molecule type" value="Genomic_DNA"/>
</dbReference>
<dbReference type="RefSeq" id="WP_011243155.1">
    <property type="nucleotide sequence ID" value="NZ_JACJTX010000005.1"/>
</dbReference>
<dbReference type="SMR" id="Q31QF1"/>
<dbReference type="STRING" id="1140.Synpcc7942_0686"/>
<dbReference type="PaxDb" id="1140-Synpcc7942_0686"/>
<dbReference type="GeneID" id="72429520"/>
<dbReference type="KEGG" id="syf:Synpcc7942_0686"/>
<dbReference type="eggNOG" id="COG1060">
    <property type="taxonomic scope" value="Bacteria"/>
</dbReference>
<dbReference type="HOGENOM" id="CLU_040406_1_1_3"/>
<dbReference type="OrthoDB" id="9802027at2"/>
<dbReference type="BioCyc" id="SYNEL:SYNPCC7942_0686-MONOMER"/>
<dbReference type="UniPathway" id="UPA00072"/>
<dbReference type="Proteomes" id="UP000889800">
    <property type="component" value="Chromosome"/>
</dbReference>
<dbReference type="GO" id="GO:0051539">
    <property type="term" value="F:4 iron, 4 sulfur cluster binding"/>
    <property type="evidence" value="ECO:0007669"/>
    <property type="project" value="UniProtKB-KW"/>
</dbReference>
<dbReference type="GO" id="GO:0141093">
    <property type="term" value="F:5-amino-6-(D-ribitylamino)uracil--L-tyrosine 4-hydroxyphenyl transferase activity"/>
    <property type="evidence" value="ECO:0007669"/>
    <property type="project" value="UniProtKB-EC"/>
</dbReference>
<dbReference type="GO" id="GO:0044689">
    <property type="term" value="F:7,8-didemethyl-8-hydroxy-5-deazariboflavin synthase activity"/>
    <property type="evidence" value="ECO:0007669"/>
    <property type="project" value="TreeGrafter"/>
</dbReference>
<dbReference type="GO" id="GO:0005506">
    <property type="term" value="F:iron ion binding"/>
    <property type="evidence" value="ECO:0007669"/>
    <property type="project" value="UniProtKB-UniRule"/>
</dbReference>
<dbReference type="Gene3D" id="3.20.20.70">
    <property type="entry name" value="Aldolase class I"/>
    <property type="match status" value="1"/>
</dbReference>
<dbReference type="HAMAP" id="MF_01612">
    <property type="entry name" value="FO_synth_sub2"/>
    <property type="match status" value="1"/>
</dbReference>
<dbReference type="InterPro" id="IPR013785">
    <property type="entry name" value="Aldolase_TIM"/>
</dbReference>
<dbReference type="InterPro" id="IPR045567">
    <property type="entry name" value="CofH/MnqC-like_C"/>
</dbReference>
<dbReference type="InterPro" id="IPR019940">
    <property type="entry name" value="CofH_family"/>
</dbReference>
<dbReference type="InterPro" id="IPR034405">
    <property type="entry name" value="F420"/>
</dbReference>
<dbReference type="InterPro" id="IPR020050">
    <property type="entry name" value="FO_synthase_su2"/>
</dbReference>
<dbReference type="InterPro" id="IPR007197">
    <property type="entry name" value="rSAM"/>
</dbReference>
<dbReference type="NCBIfam" id="TIGR00423">
    <property type="entry name" value="CofH family radical SAM protein"/>
    <property type="match status" value="1"/>
</dbReference>
<dbReference type="NCBIfam" id="TIGR03551">
    <property type="entry name" value="F420_cofH"/>
    <property type="match status" value="1"/>
</dbReference>
<dbReference type="NCBIfam" id="NF005609">
    <property type="entry name" value="PRK07360.1"/>
    <property type="match status" value="1"/>
</dbReference>
<dbReference type="PANTHER" id="PTHR43076">
    <property type="entry name" value="FO SYNTHASE (COFH)"/>
    <property type="match status" value="1"/>
</dbReference>
<dbReference type="PANTHER" id="PTHR43076:SF1">
    <property type="entry name" value="LIPOYL SYNTHASE 2"/>
    <property type="match status" value="1"/>
</dbReference>
<dbReference type="Pfam" id="PF19288">
    <property type="entry name" value="CofH_C"/>
    <property type="match status" value="1"/>
</dbReference>
<dbReference type="Pfam" id="PF04055">
    <property type="entry name" value="Radical_SAM"/>
    <property type="match status" value="1"/>
</dbReference>
<dbReference type="PIRSF" id="PIRSF004762">
    <property type="entry name" value="CHP00423"/>
    <property type="match status" value="1"/>
</dbReference>
<dbReference type="SFLD" id="SFLDG01388">
    <property type="entry name" value="7_8-didemethyl-8-hydroxy-5-dea"/>
    <property type="match status" value="1"/>
</dbReference>
<dbReference type="SFLD" id="SFLDG01064">
    <property type="entry name" value="F420__menaquinone_cofactor_bio"/>
    <property type="match status" value="1"/>
</dbReference>
<dbReference type="SFLD" id="SFLDG01389">
    <property type="entry name" value="menaquinone_synthsis_involved"/>
    <property type="match status" value="1"/>
</dbReference>
<dbReference type="SUPFAM" id="SSF102114">
    <property type="entry name" value="Radical SAM enzymes"/>
    <property type="match status" value="1"/>
</dbReference>
<dbReference type="PROSITE" id="PS51918">
    <property type="entry name" value="RADICAL_SAM"/>
    <property type="match status" value="1"/>
</dbReference>
<reference key="1">
    <citation type="submission" date="2005-08" db="EMBL/GenBank/DDBJ databases">
        <title>Complete sequence of chromosome 1 of Synechococcus elongatus PCC 7942.</title>
        <authorList>
            <consortium name="US DOE Joint Genome Institute"/>
            <person name="Copeland A."/>
            <person name="Lucas S."/>
            <person name="Lapidus A."/>
            <person name="Barry K."/>
            <person name="Detter J.C."/>
            <person name="Glavina T."/>
            <person name="Hammon N."/>
            <person name="Israni S."/>
            <person name="Pitluck S."/>
            <person name="Schmutz J."/>
            <person name="Larimer F."/>
            <person name="Land M."/>
            <person name="Kyrpides N."/>
            <person name="Lykidis A."/>
            <person name="Golden S."/>
            <person name="Richardson P."/>
        </authorList>
    </citation>
    <scope>NUCLEOTIDE SEQUENCE [LARGE SCALE GENOMIC DNA]</scope>
    <source>
        <strain>ATCC 33912 / PCC 7942 / FACHB-805</strain>
    </source>
</reference>
<protein>
    <recommendedName>
        <fullName evidence="1">5-amino-6-(D-ribitylamino)uracil--L-tyrosine 4-hydroxyphenyl transferase</fullName>
        <ecNumber evidence="1">2.5.1.147</ecNumber>
    </recommendedName>
    <alternativeName>
        <fullName evidence="1">FO synthase subunit 2</fullName>
    </alternativeName>
</protein>
<evidence type="ECO:0000255" key="1">
    <source>
        <dbReference type="HAMAP-Rule" id="MF_01612"/>
    </source>
</evidence>
<evidence type="ECO:0000255" key="2">
    <source>
        <dbReference type="PROSITE-ProRule" id="PRU01266"/>
    </source>
</evidence>
<organism>
    <name type="scientific">Synechococcus elongatus (strain ATCC 33912 / PCC 7942 / FACHB-805)</name>
    <name type="common">Anacystis nidulans R2</name>
    <dbReference type="NCBI Taxonomy" id="1140"/>
    <lineage>
        <taxon>Bacteria</taxon>
        <taxon>Bacillati</taxon>
        <taxon>Cyanobacteriota</taxon>
        <taxon>Cyanophyceae</taxon>
        <taxon>Synechococcales</taxon>
        <taxon>Synechococcaceae</taxon>
        <taxon>Synechococcus</taxon>
    </lineage>
</organism>
<keyword id="KW-0004">4Fe-4S</keyword>
<keyword id="KW-0408">Iron</keyword>
<keyword id="KW-0411">Iron-sulfur</keyword>
<keyword id="KW-0479">Metal-binding</keyword>
<keyword id="KW-1185">Reference proteome</keyword>
<keyword id="KW-0949">S-adenosyl-L-methionine</keyword>
<keyword id="KW-0808">Transferase</keyword>